<keyword id="KW-0004">4Fe-4S</keyword>
<keyword id="KW-0067">ATP-binding</keyword>
<keyword id="KW-0963">Cytoplasm</keyword>
<keyword id="KW-0408">Iron</keyword>
<keyword id="KW-0411">Iron-sulfur</keyword>
<keyword id="KW-0460">Magnesium</keyword>
<keyword id="KW-0479">Metal-binding</keyword>
<keyword id="KW-0547">Nucleotide-binding</keyword>
<keyword id="KW-0694">RNA-binding</keyword>
<keyword id="KW-0808">Transferase</keyword>
<keyword id="KW-0819">tRNA processing</keyword>
<keyword id="KW-0820">tRNA-binding</keyword>
<protein>
    <recommendedName>
        <fullName evidence="1">tRNA-cytidine(32) 2-sulfurtransferase</fullName>
        <ecNumber evidence="1">2.8.1.-</ecNumber>
    </recommendedName>
    <alternativeName>
        <fullName evidence="1">Two-thiocytidine biosynthesis protein A</fullName>
    </alternativeName>
    <alternativeName>
        <fullName evidence="1">tRNA 2-thiocytidine biosynthesis protein TtcA</fullName>
    </alternativeName>
</protein>
<organism>
    <name type="scientific">Burkholderia cenocepacia (strain HI2424)</name>
    <dbReference type="NCBI Taxonomy" id="331272"/>
    <lineage>
        <taxon>Bacteria</taxon>
        <taxon>Pseudomonadati</taxon>
        <taxon>Pseudomonadota</taxon>
        <taxon>Betaproteobacteria</taxon>
        <taxon>Burkholderiales</taxon>
        <taxon>Burkholderiaceae</taxon>
        <taxon>Burkholderia</taxon>
        <taxon>Burkholderia cepacia complex</taxon>
    </lineage>
</organism>
<feature type="chain" id="PRO_0000348682" description="tRNA-cytidine(32) 2-sulfurtransferase">
    <location>
        <begin position="1"/>
        <end position="331"/>
    </location>
</feature>
<feature type="region of interest" description="Disordered" evidence="2">
    <location>
        <begin position="1"/>
        <end position="33"/>
    </location>
</feature>
<feature type="short sequence motif" description="PP-loop motif" evidence="1">
    <location>
        <begin position="71"/>
        <end position="76"/>
    </location>
</feature>
<feature type="compositionally biased region" description="Low complexity" evidence="2">
    <location>
        <begin position="8"/>
        <end position="23"/>
    </location>
</feature>
<feature type="binding site" evidence="1">
    <location>
        <position position="146"/>
    </location>
    <ligand>
        <name>[4Fe-4S] cluster</name>
        <dbReference type="ChEBI" id="CHEBI:49883"/>
    </ligand>
</feature>
<feature type="binding site" evidence="1">
    <location>
        <position position="149"/>
    </location>
    <ligand>
        <name>[4Fe-4S] cluster</name>
        <dbReference type="ChEBI" id="CHEBI:49883"/>
    </ligand>
</feature>
<feature type="binding site" evidence="1">
    <location>
        <position position="237"/>
    </location>
    <ligand>
        <name>[4Fe-4S] cluster</name>
        <dbReference type="ChEBI" id="CHEBI:49883"/>
    </ligand>
</feature>
<comment type="function">
    <text evidence="1">Catalyzes the ATP-dependent 2-thiolation of cytidine in position 32 of tRNA, to form 2-thiocytidine (s(2)C32). The sulfur atoms are provided by the cysteine/cysteine desulfurase (IscS) system.</text>
</comment>
<comment type="catalytic activity">
    <reaction evidence="1">
        <text>cytidine(32) in tRNA + S-sulfanyl-L-cysteinyl-[cysteine desulfurase] + AH2 + ATP = 2-thiocytidine(32) in tRNA + L-cysteinyl-[cysteine desulfurase] + A + AMP + diphosphate + H(+)</text>
        <dbReference type="Rhea" id="RHEA:57048"/>
        <dbReference type="Rhea" id="RHEA-COMP:10288"/>
        <dbReference type="Rhea" id="RHEA-COMP:12157"/>
        <dbReference type="Rhea" id="RHEA-COMP:12158"/>
        <dbReference type="Rhea" id="RHEA-COMP:14821"/>
        <dbReference type="ChEBI" id="CHEBI:13193"/>
        <dbReference type="ChEBI" id="CHEBI:15378"/>
        <dbReference type="ChEBI" id="CHEBI:17499"/>
        <dbReference type="ChEBI" id="CHEBI:29950"/>
        <dbReference type="ChEBI" id="CHEBI:30616"/>
        <dbReference type="ChEBI" id="CHEBI:33019"/>
        <dbReference type="ChEBI" id="CHEBI:61963"/>
        <dbReference type="ChEBI" id="CHEBI:82748"/>
        <dbReference type="ChEBI" id="CHEBI:141453"/>
        <dbReference type="ChEBI" id="CHEBI:456215"/>
    </reaction>
    <physiologicalReaction direction="left-to-right" evidence="1">
        <dbReference type="Rhea" id="RHEA:57049"/>
    </physiologicalReaction>
</comment>
<comment type="cofactor">
    <cofactor evidence="1">
        <name>Mg(2+)</name>
        <dbReference type="ChEBI" id="CHEBI:18420"/>
    </cofactor>
</comment>
<comment type="cofactor">
    <cofactor evidence="1">
        <name>[4Fe-4S] cluster</name>
        <dbReference type="ChEBI" id="CHEBI:49883"/>
    </cofactor>
    <text evidence="1">Binds 1 [4Fe-4S] cluster per subunit. The cluster is chelated by three Cys residues, the fourth Fe has a free coordination site that may bind a sulfur atom transferred from the persulfide of IscS.</text>
</comment>
<comment type="pathway">
    <text evidence="1">tRNA modification.</text>
</comment>
<comment type="subunit">
    <text evidence="1">Homodimer.</text>
</comment>
<comment type="subcellular location">
    <subcellularLocation>
        <location evidence="1">Cytoplasm</location>
    </subcellularLocation>
</comment>
<comment type="miscellaneous">
    <text evidence="1">The thiolation reaction likely consists of two steps: a first activation step by ATP to form an adenylated intermediate of the target base of tRNA, and a second nucleophilic substitution step of the sulfur (S) atom supplied by the hydrosulfide attached to the Fe-S cluster.</text>
</comment>
<comment type="similarity">
    <text evidence="1">Belongs to the TtcA family.</text>
</comment>
<proteinExistence type="inferred from homology"/>
<sequence length="331" mass="36737">MNAPHMNDTAADAATLDDAAAPAGRPALTRREQKEAYENNKLFKRIVRQVGQAIGDYNMIEQGDKVMVCLSGGKDSYAMLDVLLRLRERAPIDFDIVAVNLDQKQPGFPEHVLPEYLKQVGVPFHIENQDTYSIVKRLVPEGKTTCSLCSRLRRGILYRVAGELGATKIALGHHRDDIVQTLLLNMFYGGKLKGMPPKLQSDDGKNIVIRPLAYVKETDLEKYAELREFPIIPCNLCGSQPNLKRAEMKALIREWDKRFPGRVDNMFNALAKVVPSHLMDTTLYPFQSLRATGEADPQGDIAFDEEPCASGDDAAAPGAAQPISIVQFDDL</sequence>
<dbReference type="EC" id="2.8.1.-" evidence="1"/>
<dbReference type="EMBL" id="CP000458">
    <property type="protein sequence ID" value="ABK09728.1"/>
    <property type="molecule type" value="Genomic_DNA"/>
</dbReference>
<dbReference type="RefSeq" id="WP_011694429.1">
    <property type="nucleotide sequence ID" value="NC_008542.1"/>
</dbReference>
<dbReference type="SMR" id="A0KB51"/>
<dbReference type="KEGG" id="bch:Bcen2424_2980"/>
<dbReference type="HOGENOM" id="CLU_026481_0_0_4"/>
<dbReference type="GO" id="GO:0005737">
    <property type="term" value="C:cytoplasm"/>
    <property type="evidence" value="ECO:0007669"/>
    <property type="project" value="UniProtKB-SubCell"/>
</dbReference>
<dbReference type="GO" id="GO:0051539">
    <property type="term" value="F:4 iron, 4 sulfur cluster binding"/>
    <property type="evidence" value="ECO:0007669"/>
    <property type="project" value="UniProtKB-UniRule"/>
</dbReference>
<dbReference type="GO" id="GO:0005524">
    <property type="term" value="F:ATP binding"/>
    <property type="evidence" value="ECO:0007669"/>
    <property type="project" value="UniProtKB-UniRule"/>
</dbReference>
<dbReference type="GO" id="GO:0000287">
    <property type="term" value="F:magnesium ion binding"/>
    <property type="evidence" value="ECO:0007669"/>
    <property type="project" value="UniProtKB-UniRule"/>
</dbReference>
<dbReference type="GO" id="GO:0016783">
    <property type="term" value="F:sulfurtransferase activity"/>
    <property type="evidence" value="ECO:0007669"/>
    <property type="project" value="UniProtKB-UniRule"/>
</dbReference>
<dbReference type="GO" id="GO:0000049">
    <property type="term" value="F:tRNA binding"/>
    <property type="evidence" value="ECO:0007669"/>
    <property type="project" value="UniProtKB-KW"/>
</dbReference>
<dbReference type="GO" id="GO:0034227">
    <property type="term" value="P:tRNA thio-modification"/>
    <property type="evidence" value="ECO:0007669"/>
    <property type="project" value="UniProtKB-UniRule"/>
</dbReference>
<dbReference type="CDD" id="cd24138">
    <property type="entry name" value="TtcA-like"/>
    <property type="match status" value="1"/>
</dbReference>
<dbReference type="Gene3D" id="3.40.50.620">
    <property type="entry name" value="HUPs"/>
    <property type="match status" value="1"/>
</dbReference>
<dbReference type="HAMAP" id="MF_01850">
    <property type="entry name" value="TtcA"/>
    <property type="match status" value="1"/>
</dbReference>
<dbReference type="InterPro" id="IPR014729">
    <property type="entry name" value="Rossmann-like_a/b/a_fold"/>
</dbReference>
<dbReference type="InterPro" id="IPR011063">
    <property type="entry name" value="TilS/TtcA_N"/>
</dbReference>
<dbReference type="InterPro" id="IPR012089">
    <property type="entry name" value="tRNA_Cyd_32_2_STrfase"/>
</dbReference>
<dbReference type="NCBIfam" id="NF007972">
    <property type="entry name" value="PRK10696.1"/>
    <property type="match status" value="1"/>
</dbReference>
<dbReference type="PANTHER" id="PTHR43686:SF1">
    <property type="entry name" value="AMINOTRAN_5 DOMAIN-CONTAINING PROTEIN"/>
    <property type="match status" value="1"/>
</dbReference>
<dbReference type="PANTHER" id="PTHR43686">
    <property type="entry name" value="SULFURTRANSFERASE-RELATED"/>
    <property type="match status" value="1"/>
</dbReference>
<dbReference type="Pfam" id="PF01171">
    <property type="entry name" value="ATP_bind_3"/>
    <property type="match status" value="1"/>
</dbReference>
<dbReference type="SUPFAM" id="SSF52402">
    <property type="entry name" value="Adenine nucleotide alpha hydrolases-like"/>
    <property type="match status" value="1"/>
</dbReference>
<gene>
    <name evidence="1" type="primary">ttcA</name>
    <name type="ordered locus">Bcen2424_2980</name>
</gene>
<reference key="1">
    <citation type="submission" date="2006-08" db="EMBL/GenBank/DDBJ databases">
        <title>Complete sequence of chromosome 1 of Burkholderia cenocepacia HI2424.</title>
        <authorList>
            <person name="Copeland A."/>
            <person name="Lucas S."/>
            <person name="Lapidus A."/>
            <person name="Barry K."/>
            <person name="Detter J.C."/>
            <person name="Glavina del Rio T."/>
            <person name="Hammon N."/>
            <person name="Israni S."/>
            <person name="Pitluck S."/>
            <person name="Chain P."/>
            <person name="Malfatti S."/>
            <person name="Shin M."/>
            <person name="Vergez L."/>
            <person name="Schmutz J."/>
            <person name="Larimer F."/>
            <person name="Land M."/>
            <person name="Hauser L."/>
            <person name="Kyrpides N."/>
            <person name="Kim E."/>
            <person name="LiPuma J.J."/>
            <person name="Gonzalez C.F."/>
            <person name="Konstantinidis K."/>
            <person name="Tiedje J.M."/>
            <person name="Richardson P."/>
        </authorList>
    </citation>
    <scope>NUCLEOTIDE SEQUENCE [LARGE SCALE GENOMIC DNA]</scope>
    <source>
        <strain>HI2424</strain>
    </source>
</reference>
<name>TTCA_BURCH</name>
<accession>A0KB51</accession>
<evidence type="ECO:0000255" key="1">
    <source>
        <dbReference type="HAMAP-Rule" id="MF_01850"/>
    </source>
</evidence>
<evidence type="ECO:0000256" key="2">
    <source>
        <dbReference type="SAM" id="MobiDB-lite"/>
    </source>
</evidence>